<accession>Q8WHZ7</accession>
<keyword id="KW-0150">Chloroplast</keyword>
<keyword id="KW-0378">Hydrolase</keyword>
<keyword id="KW-0934">Plastid</keyword>
<keyword id="KW-0645">Protease</keyword>
<keyword id="KW-0720">Serine protease</keyword>
<proteinExistence type="inferred from homology"/>
<sequence>MPIGVPKVPFRLPGEEDAGWVDVYNRLYRERLLFLGQQVDDEIANQLIGIMMYLNGEDENRDMYSYINSPGGAVLPGISVYDAMQFVVPDVHTICMGLAASMGSFILTGGEITKRIALPHARVMIHQPASSYYDGQAGECIMEAEEILKLRDCITRVYAQRTEKPLWVISEDMERDIFMSAKEARAYGIVDLIALEND</sequence>
<protein>
    <recommendedName>
        <fullName evidence="1">ATP-dependent Clp protease proteolytic subunit</fullName>
        <ecNumber evidence="1">3.4.21.92</ecNumber>
    </recommendedName>
    <alternativeName>
        <fullName evidence="1">Endopeptidase Clp</fullName>
    </alternativeName>
</protein>
<evidence type="ECO:0000255" key="1">
    <source>
        <dbReference type="HAMAP-Rule" id="MF_00444"/>
    </source>
</evidence>
<reference key="1">
    <citation type="journal article" date="2004" name="Mol. Biol. Evol.">
        <title>Chloroplast phylogeny indicates that bryophytes are monophyletic.</title>
        <authorList>
            <person name="Nishiyama T."/>
            <person name="Wolf P.G."/>
            <person name="Kugita M."/>
            <person name="Sinclair R.B."/>
            <person name="Sugita M."/>
            <person name="Sugiura C."/>
            <person name="Wakasugi T."/>
            <person name="Yamada K."/>
            <person name="Yoshinaga K."/>
            <person name="Yamaguchi K."/>
            <person name="Ueda K."/>
            <person name="Hasebe M."/>
        </authorList>
    </citation>
    <scope>NUCLEOTIDE SEQUENCE [LARGE SCALE GENOMIC DNA]</scope>
    <source>
        <strain>Kingyoku</strain>
    </source>
</reference>
<comment type="function">
    <text evidence="1">Cleaves peptides in various proteins in a process that requires ATP hydrolysis. Has a chymotrypsin-like activity. Plays a major role in the degradation of misfolded proteins.</text>
</comment>
<comment type="catalytic activity">
    <reaction evidence="1">
        <text>Hydrolysis of proteins to small peptides in the presence of ATP and magnesium. alpha-casein is the usual test substrate. In the absence of ATP, only oligopeptides shorter than five residues are hydrolyzed (such as succinyl-Leu-Tyr-|-NHMec, and Leu-Tyr-Leu-|-Tyr-Trp, in which cleavage of the -Tyr-|-Leu- and -Tyr-|-Trp bonds also occurs).</text>
        <dbReference type="EC" id="3.4.21.92"/>
    </reaction>
</comment>
<comment type="subunit">
    <text>Component of the chloroplastic Clp protease core complex.</text>
</comment>
<comment type="subcellular location">
    <subcellularLocation>
        <location evidence="1">Plastid</location>
        <location evidence="1">Chloroplast stroma</location>
    </subcellularLocation>
</comment>
<comment type="similarity">
    <text evidence="1">Belongs to the peptidase S14 family.</text>
</comment>
<organism>
    <name type="scientific">Psilotum nudum</name>
    <name type="common">Whisk fern</name>
    <name type="synonym">Lycopodium nudum</name>
    <dbReference type="NCBI Taxonomy" id="3240"/>
    <lineage>
        <taxon>Eukaryota</taxon>
        <taxon>Viridiplantae</taxon>
        <taxon>Streptophyta</taxon>
        <taxon>Embryophyta</taxon>
        <taxon>Tracheophyta</taxon>
        <taxon>Polypodiopsida</taxon>
        <taxon>Ophioglossidae</taxon>
        <taxon>Psilotales</taxon>
        <taxon>Psilotaceae</taxon>
        <taxon>Psilotum</taxon>
    </lineage>
</organism>
<dbReference type="EC" id="3.4.21.92" evidence="1"/>
<dbReference type="EMBL" id="AP004638">
    <property type="protein sequence ID" value="BAB84241.1"/>
    <property type="molecule type" value="Genomic_DNA"/>
</dbReference>
<dbReference type="RefSeq" id="NP_569653.1">
    <property type="nucleotide sequence ID" value="NC_003386.1"/>
</dbReference>
<dbReference type="SMR" id="Q8WHZ7"/>
<dbReference type="MEROPS" id="S14.002"/>
<dbReference type="GeneID" id="2545111"/>
<dbReference type="GO" id="GO:0009570">
    <property type="term" value="C:chloroplast stroma"/>
    <property type="evidence" value="ECO:0007669"/>
    <property type="project" value="UniProtKB-SubCell"/>
</dbReference>
<dbReference type="GO" id="GO:0009368">
    <property type="term" value="C:endopeptidase Clp complex"/>
    <property type="evidence" value="ECO:0007669"/>
    <property type="project" value="TreeGrafter"/>
</dbReference>
<dbReference type="GO" id="GO:0004176">
    <property type="term" value="F:ATP-dependent peptidase activity"/>
    <property type="evidence" value="ECO:0007669"/>
    <property type="project" value="InterPro"/>
</dbReference>
<dbReference type="GO" id="GO:0051117">
    <property type="term" value="F:ATPase binding"/>
    <property type="evidence" value="ECO:0007669"/>
    <property type="project" value="TreeGrafter"/>
</dbReference>
<dbReference type="GO" id="GO:0004252">
    <property type="term" value="F:serine-type endopeptidase activity"/>
    <property type="evidence" value="ECO:0007669"/>
    <property type="project" value="UniProtKB-UniRule"/>
</dbReference>
<dbReference type="GO" id="GO:0006515">
    <property type="term" value="P:protein quality control for misfolded or incompletely synthesized proteins"/>
    <property type="evidence" value="ECO:0007669"/>
    <property type="project" value="TreeGrafter"/>
</dbReference>
<dbReference type="CDD" id="cd07017">
    <property type="entry name" value="S14_ClpP_2"/>
    <property type="match status" value="1"/>
</dbReference>
<dbReference type="FunFam" id="3.90.226.10:FF:000006">
    <property type="entry name" value="ATP-dependent Clp protease proteolytic subunit"/>
    <property type="match status" value="1"/>
</dbReference>
<dbReference type="Gene3D" id="3.90.226.10">
    <property type="entry name" value="2-enoyl-CoA Hydratase, Chain A, domain 1"/>
    <property type="match status" value="1"/>
</dbReference>
<dbReference type="HAMAP" id="MF_00444">
    <property type="entry name" value="ClpP"/>
    <property type="match status" value="1"/>
</dbReference>
<dbReference type="InterPro" id="IPR001907">
    <property type="entry name" value="ClpP"/>
</dbReference>
<dbReference type="InterPro" id="IPR029045">
    <property type="entry name" value="ClpP/crotonase-like_dom_sf"/>
</dbReference>
<dbReference type="InterPro" id="IPR023562">
    <property type="entry name" value="ClpP/TepA"/>
</dbReference>
<dbReference type="InterPro" id="IPR033135">
    <property type="entry name" value="ClpP_His_AS"/>
</dbReference>
<dbReference type="InterPro" id="IPR018215">
    <property type="entry name" value="ClpP_Ser_AS"/>
</dbReference>
<dbReference type="PANTHER" id="PTHR10381">
    <property type="entry name" value="ATP-DEPENDENT CLP PROTEASE PROTEOLYTIC SUBUNIT"/>
    <property type="match status" value="1"/>
</dbReference>
<dbReference type="PANTHER" id="PTHR10381:SF15">
    <property type="entry name" value="CHLOROPLASTIC ATP-DEPENDENT CLP PROTEASE PROTEOLYTIC SUBUNIT 1"/>
    <property type="match status" value="1"/>
</dbReference>
<dbReference type="Pfam" id="PF00574">
    <property type="entry name" value="CLP_protease"/>
    <property type="match status" value="1"/>
</dbReference>
<dbReference type="PRINTS" id="PR00127">
    <property type="entry name" value="CLPPROTEASEP"/>
</dbReference>
<dbReference type="SUPFAM" id="SSF52096">
    <property type="entry name" value="ClpP/crotonase"/>
    <property type="match status" value="1"/>
</dbReference>
<dbReference type="PROSITE" id="PS00382">
    <property type="entry name" value="CLP_PROTEASE_HIS"/>
    <property type="match status" value="1"/>
</dbReference>
<dbReference type="PROSITE" id="PS00381">
    <property type="entry name" value="CLP_PROTEASE_SER"/>
    <property type="match status" value="1"/>
</dbReference>
<name>CLPP_PSINU</name>
<feature type="chain" id="PRO_0000179756" description="ATP-dependent Clp protease proteolytic subunit">
    <location>
        <begin position="1"/>
        <end position="198"/>
    </location>
</feature>
<feature type="active site" description="Nucleophile" evidence="1">
    <location>
        <position position="101"/>
    </location>
</feature>
<feature type="active site" evidence="1">
    <location>
        <position position="126"/>
    </location>
</feature>
<gene>
    <name evidence="1" type="primary">clpP</name>
</gene>
<geneLocation type="chloroplast"/>